<feature type="chain" id="PRO_0000381507" description="Biotin synthase">
    <location>
        <begin position="1"/>
        <end position="341"/>
    </location>
</feature>
<feature type="domain" description="Radical SAM core" evidence="2">
    <location>
        <begin position="53"/>
        <end position="272"/>
    </location>
</feature>
<feature type="binding site" evidence="1">
    <location>
        <position position="68"/>
    </location>
    <ligand>
        <name>[4Fe-4S] cluster</name>
        <dbReference type="ChEBI" id="CHEBI:49883"/>
        <note>4Fe-4S-S-AdoMet</note>
    </ligand>
</feature>
<feature type="binding site" evidence="1">
    <location>
        <position position="72"/>
    </location>
    <ligand>
        <name>[4Fe-4S] cluster</name>
        <dbReference type="ChEBI" id="CHEBI:49883"/>
        <note>4Fe-4S-S-AdoMet</note>
    </ligand>
</feature>
<feature type="binding site" evidence="1">
    <location>
        <position position="75"/>
    </location>
    <ligand>
        <name>[4Fe-4S] cluster</name>
        <dbReference type="ChEBI" id="CHEBI:49883"/>
        <note>4Fe-4S-S-AdoMet</note>
    </ligand>
</feature>
<feature type="binding site" evidence="1">
    <location>
        <position position="112"/>
    </location>
    <ligand>
        <name>[2Fe-2S] cluster</name>
        <dbReference type="ChEBI" id="CHEBI:190135"/>
    </ligand>
</feature>
<feature type="binding site" evidence="1">
    <location>
        <position position="143"/>
    </location>
    <ligand>
        <name>[2Fe-2S] cluster</name>
        <dbReference type="ChEBI" id="CHEBI:190135"/>
    </ligand>
</feature>
<feature type="binding site" evidence="1">
    <location>
        <position position="203"/>
    </location>
    <ligand>
        <name>[2Fe-2S] cluster</name>
        <dbReference type="ChEBI" id="CHEBI:190135"/>
    </ligand>
</feature>
<feature type="binding site" evidence="1">
    <location>
        <position position="276"/>
    </location>
    <ligand>
        <name>[2Fe-2S] cluster</name>
        <dbReference type="ChEBI" id="CHEBI:190135"/>
    </ligand>
</feature>
<comment type="function">
    <text evidence="1">Catalyzes the conversion of dethiobiotin (DTB) to biotin by the insertion of a sulfur atom into dethiobiotin via a radical-based mechanism.</text>
</comment>
<comment type="catalytic activity">
    <reaction evidence="1">
        <text>(4R,5S)-dethiobiotin + (sulfur carrier)-SH + 2 reduced [2Fe-2S]-[ferredoxin] + 2 S-adenosyl-L-methionine = (sulfur carrier)-H + biotin + 2 5'-deoxyadenosine + 2 L-methionine + 2 oxidized [2Fe-2S]-[ferredoxin]</text>
        <dbReference type="Rhea" id="RHEA:22060"/>
        <dbReference type="Rhea" id="RHEA-COMP:10000"/>
        <dbReference type="Rhea" id="RHEA-COMP:10001"/>
        <dbReference type="Rhea" id="RHEA-COMP:14737"/>
        <dbReference type="Rhea" id="RHEA-COMP:14739"/>
        <dbReference type="ChEBI" id="CHEBI:17319"/>
        <dbReference type="ChEBI" id="CHEBI:29917"/>
        <dbReference type="ChEBI" id="CHEBI:33737"/>
        <dbReference type="ChEBI" id="CHEBI:33738"/>
        <dbReference type="ChEBI" id="CHEBI:57586"/>
        <dbReference type="ChEBI" id="CHEBI:57844"/>
        <dbReference type="ChEBI" id="CHEBI:59789"/>
        <dbReference type="ChEBI" id="CHEBI:64428"/>
        <dbReference type="ChEBI" id="CHEBI:149473"/>
        <dbReference type="EC" id="2.8.1.6"/>
    </reaction>
</comment>
<comment type="cofactor">
    <cofactor evidence="1">
        <name>[4Fe-4S] cluster</name>
        <dbReference type="ChEBI" id="CHEBI:49883"/>
    </cofactor>
    <text evidence="1">Binds 1 [4Fe-4S] cluster. The cluster is coordinated with 3 cysteines and an exchangeable S-adenosyl-L-methionine.</text>
</comment>
<comment type="cofactor">
    <cofactor evidence="1">
        <name>[2Fe-2S] cluster</name>
        <dbReference type="ChEBI" id="CHEBI:190135"/>
    </cofactor>
    <text evidence="1">Binds 1 [2Fe-2S] cluster. The cluster is coordinated with 3 cysteines and 1 arginine.</text>
</comment>
<comment type="pathway">
    <text evidence="1">Cofactor biosynthesis; biotin biosynthesis; biotin from 7,8-diaminononanoate: step 2/2.</text>
</comment>
<comment type="subunit">
    <text evidence="1">Homodimer.</text>
</comment>
<comment type="similarity">
    <text evidence="1">Belongs to the radical SAM superfamily. Biotin synthase family.</text>
</comment>
<accession>Q3SW30</accession>
<reference key="1">
    <citation type="journal article" date="2006" name="Appl. Environ. Microbiol.">
        <title>Genome sequence of the chemolithoautotrophic nitrite-oxidizing bacterium Nitrobacter winogradskyi Nb-255.</title>
        <authorList>
            <person name="Starkenburg S.R."/>
            <person name="Chain P.S.G."/>
            <person name="Sayavedra-Soto L.A."/>
            <person name="Hauser L."/>
            <person name="Land M.L."/>
            <person name="Larimer F.W."/>
            <person name="Malfatti S.A."/>
            <person name="Klotz M.G."/>
            <person name="Bottomley P.J."/>
            <person name="Arp D.J."/>
            <person name="Hickey W.J."/>
        </authorList>
    </citation>
    <scope>NUCLEOTIDE SEQUENCE [LARGE SCALE GENOMIC DNA]</scope>
    <source>
        <strain>ATCC 25391 / DSM 10237 / CIP 104748 / NCIMB 11846 / Nb-255</strain>
    </source>
</reference>
<proteinExistence type="inferred from homology"/>
<organism>
    <name type="scientific">Nitrobacter winogradskyi (strain ATCC 25391 / DSM 10237 / CIP 104748 / NCIMB 11846 / Nb-255)</name>
    <dbReference type="NCBI Taxonomy" id="323098"/>
    <lineage>
        <taxon>Bacteria</taxon>
        <taxon>Pseudomonadati</taxon>
        <taxon>Pseudomonadota</taxon>
        <taxon>Alphaproteobacteria</taxon>
        <taxon>Hyphomicrobiales</taxon>
        <taxon>Nitrobacteraceae</taxon>
        <taxon>Nitrobacter</taxon>
    </lineage>
</organism>
<keyword id="KW-0001">2Fe-2S</keyword>
<keyword id="KW-0004">4Fe-4S</keyword>
<keyword id="KW-0093">Biotin biosynthesis</keyword>
<keyword id="KW-0408">Iron</keyword>
<keyword id="KW-0411">Iron-sulfur</keyword>
<keyword id="KW-0479">Metal-binding</keyword>
<keyword id="KW-1185">Reference proteome</keyword>
<keyword id="KW-0949">S-adenosyl-L-methionine</keyword>
<keyword id="KW-0808">Transferase</keyword>
<protein>
    <recommendedName>
        <fullName evidence="1">Biotin synthase</fullName>
        <ecNumber evidence="1">2.8.1.6</ecNumber>
    </recommendedName>
</protein>
<name>BIOB_NITWN</name>
<gene>
    <name evidence="1" type="primary">bioB</name>
    <name type="ordered locus">Nwi_0243</name>
</gene>
<evidence type="ECO:0000255" key="1">
    <source>
        <dbReference type="HAMAP-Rule" id="MF_01694"/>
    </source>
</evidence>
<evidence type="ECO:0000255" key="2">
    <source>
        <dbReference type="PROSITE-ProRule" id="PRU01266"/>
    </source>
</evidence>
<dbReference type="EC" id="2.8.1.6" evidence="1"/>
<dbReference type="EMBL" id="CP000115">
    <property type="protein sequence ID" value="ABA03511.1"/>
    <property type="molecule type" value="Genomic_DNA"/>
</dbReference>
<dbReference type="RefSeq" id="WP_011313577.1">
    <property type="nucleotide sequence ID" value="NC_007406.1"/>
</dbReference>
<dbReference type="SMR" id="Q3SW30"/>
<dbReference type="STRING" id="323098.Nwi_0243"/>
<dbReference type="KEGG" id="nwi:Nwi_0243"/>
<dbReference type="eggNOG" id="COG0502">
    <property type="taxonomic scope" value="Bacteria"/>
</dbReference>
<dbReference type="HOGENOM" id="CLU_033172_1_2_5"/>
<dbReference type="OrthoDB" id="9786826at2"/>
<dbReference type="UniPathway" id="UPA00078">
    <property type="reaction ID" value="UER00162"/>
</dbReference>
<dbReference type="Proteomes" id="UP000002531">
    <property type="component" value="Chromosome"/>
</dbReference>
<dbReference type="GO" id="GO:0051537">
    <property type="term" value="F:2 iron, 2 sulfur cluster binding"/>
    <property type="evidence" value="ECO:0007669"/>
    <property type="project" value="UniProtKB-KW"/>
</dbReference>
<dbReference type="GO" id="GO:0051539">
    <property type="term" value="F:4 iron, 4 sulfur cluster binding"/>
    <property type="evidence" value="ECO:0007669"/>
    <property type="project" value="UniProtKB-KW"/>
</dbReference>
<dbReference type="GO" id="GO:0004076">
    <property type="term" value="F:biotin synthase activity"/>
    <property type="evidence" value="ECO:0007669"/>
    <property type="project" value="UniProtKB-UniRule"/>
</dbReference>
<dbReference type="GO" id="GO:0005506">
    <property type="term" value="F:iron ion binding"/>
    <property type="evidence" value="ECO:0007669"/>
    <property type="project" value="UniProtKB-UniRule"/>
</dbReference>
<dbReference type="GO" id="GO:0009102">
    <property type="term" value="P:biotin biosynthetic process"/>
    <property type="evidence" value="ECO:0007669"/>
    <property type="project" value="UniProtKB-UniRule"/>
</dbReference>
<dbReference type="CDD" id="cd01335">
    <property type="entry name" value="Radical_SAM"/>
    <property type="match status" value="1"/>
</dbReference>
<dbReference type="FunFam" id="3.20.20.70:FF:000026">
    <property type="entry name" value="Biotin synthase"/>
    <property type="match status" value="1"/>
</dbReference>
<dbReference type="Gene3D" id="3.20.20.70">
    <property type="entry name" value="Aldolase class I"/>
    <property type="match status" value="1"/>
</dbReference>
<dbReference type="HAMAP" id="MF_01694">
    <property type="entry name" value="BioB"/>
    <property type="match status" value="1"/>
</dbReference>
<dbReference type="InterPro" id="IPR013785">
    <property type="entry name" value="Aldolase_TIM"/>
</dbReference>
<dbReference type="InterPro" id="IPR010722">
    <property type="entry name" value="BATS_dom"/>
</dbReference>
<dbReference type="InterPro" id="IPR002684">
    <property type="entry name" value="Biotin_synth/BioAB"/>
</dbReference>
<dbReference type="InterPro" id="IPR024177">
    <property type="entry name" value="Biotin_synthase"/>
</dbReference>
<dbReference type="InterPro" id="IPR006638">
    <property type="entry name" value="Elp3/MiaA/NifB-like_rSAM"/>
</dbReference>
<dbReference type="InterPro" id="IPR007197">
    <property type="entry name" value="rSAM"/>
</dbReference>
<dbReference type="NCBIfam" id="TIGR00433">
    <property type="entry name" value="bioB"/>
    <property type="match status" value="1"/>
</dbReference>
<dbReference type="PANTHER" id="PTHR22976">
    <property type="entry name" value="BIOTIN SYNTHASE"/>
    <property type="match status" value="1"/>
</dbReference>
<dbReference type="PANTHER" id="PTHR22976:SF2">
    <property type="entry name" value="BIOTIN SYNTHASE, MITOCHONDRIAL"/>
    <property type="match status" value="1"/>
</dbReference>
<dbReference type="Pfam" id="PF06968">
    <property type="entry name" value="BATS"/>
    <property type="match status" value="1"/>
</dbReference>
<dbReference type="Pfam" id="PF04055">
    <property type="entry name" value="Radical_SAM"/>
    <property type="match status" value="1"/>
</dbReference>
<dbReference type="PIRSF" id="PIRSF001619">
    <property type="entry name" value="Biotin_synth"/>
    <property type="match status" value="1"/>
</dbReference>
<dbReference type="SFLD" id="SFLDF00272">
    <property type="entry name" value="biotin_synthase"/>
    <property type="match status" value="1"/>
</dbReference>
<dbReference type="SFLD" id="SFLDG01278">
    <property type="entry name" value="biotin_synthase_like"/>
    <property type="match status" value="1"/>
</dbReference>
<dbReference type="SMART" id="SM00876">
    <property type="entry name" value="BATS"/>
    <property type="match status" value="1"/>
</dbReference>
<dbReference type="SMART" id="SM00729">
    <property type="entry name" value="Elp3"/>
    <property type="match status" value="1"/>
</dbReference>
<dbReference type="SUPFAM" id="SSF102114">
    <property type="entry name" value="Radical SAM enzymes"/>
    <property type="match status" value="1"/>
</dbReference>
<dbReference type="PROSITE" id="PS51918">
    <property type="entry name" value="RADICAL_SAM"/>
    <property type="match status" value="1"/>
</dbReference>
<sequence>MKSDPVSFDSSHDLMARPRHDWTRVEAETLYTTPFPDLLFQAQTIHRRHFDPNHVETASLLSIKTGGCPEDCGYCAQSAHYDAGVKATKLMDKDAVLETARRAKDAGAGRFCMAAAWRHPKDRDLDRVCDMISAVKALGMETCATLGMLTPEQARRLQEAGLDFYNHNVDTSPEFYDKIITTRTMQDRIETLACAREAGLKLCCGGIIGMGEQVGDRLGMLILLANLDEHPESVPINLWNEVRGVPVNDTADRPDPIALVRMIAVARIMMPKSVVRLSAGRQYMTDELQALCFVAGANSIFIGDVLLTTKNPATLRDAALLDRLGMSSPLDGVKMPAASPS</sequence>